<proteinExistence type="evidence at transcript level"/>
<sequence>MVSWKGIYFVVALFLGSFFGSIFMLGPFLPLMFISPAWYRWITDRIVATWLTLPVALLEMVFGAKVVVTGDGFIPGERSVIIMNHRTRMDWMFLWNCLLRYSYLRLEKICLKSSLKSIPGFGWAMQVAAFIFIQRKWEDDKSHFENMLHYFCDIHEPLQLLIFPEGTDLTANTKARSNDFAEKNGLRKYEYVLHPRTTGFTFVVECLREGNNLDAIHDITVAYPQNIPQTEKHLLNGNFPKEIHFHVQRYPIETVPTSKEELQLWCQKRWEEKEERLRRFYEGGKCFDETGQSIIPPCKSELRVLAVKCISLLYWTVFPMGTFALLYLYSFARWYFAAMIIIFVAQQKIFGGLELIELACHQYFKKQQKHDDTKMKKK</sequence>
<feature type="chain" id="PRO_0000291579" description="Lysocardiolipin acyltransferase 1">
    <location>
        <begin position="1"/>
        <end position="378"/>
    </location>
</feature>
<feature type="transmembrane region" description="Helical" evidence="4">
    <location>
        <begin position="9"/>
        <end position="29"/>
    </location>
</feature>
<feature type="transmembrane region" description="Helical" evidence="4">
    <location>
        <begin position="46"/>
        <end position="66"/>
    </location>
</feature>
<feature type="transmembrane region" description="Helical" evidence="4">
    <location>
        <begin position="302"/>
        <end position="322"/>
    </location>
</feature>
<feature type="transmembrane region" description="Helical" evidence="4">
    <location>
        <begin position="336"/>
        <end position="358"/>
    </location>
</feature>
<feature type="short sequence motif" description="HXXXXD motif" evidence="3">
    <location>
        <begin position="85"/>
        <end position="90"/>
    </location>
</feature>
<evidence type="ECO:0000250" key="1">
    <source>
        <dbReference type="UniProtKB" id="Q3UN02"/>
    </source>
</evidence>
<evidence type="ECO:0000250" key="2">
    <source>
        <dbReference type="UniProtKB" id="Q6UWP7"/>
    </source>
</evidence>
<evidence type="ECO:0000250" key="3">
    <source>
        <dbReference type="UniProtKB" id="Q9D517"/>
    </source>
</evidence>
<evidence type="ECO:0000255" key="4"/>
<evidence type="ECO:0000305" key="5"/>
<comment type="function">
    <text evidence="1 2">Exhibits acyl-CoA:lysocardiolipin acyltransferase (ALCAT) activity; catalyzes the reacylation of lyso-cardiolipin to cardiolipin (CL), a key step in CL remodeling (By similarity). Recognizes both monolysocardiolipin and dilysocardiolipin as substrates with a preference for linoleoyl-CoA and oleoyl-CoA as acyl donors (By similarity). Also exhibits 1-acyl-sn-glycerol-3-phosphate acyltransferase activity (AGPAT) activity; converts 1-acyl-sn-glycerol-3- phosphate (lysophosphatidic acid or LPA) into 1,2-diacyl-sn-glycerol-3- phosphate (phosphatidic acid or PA) by incorporating an acyl moiety at the sn-2 position of the glycerol backbone (By similarity). Possesses both lysophosphatidylinositol acyltransferase (LPIAT) and lysophosphatidylglycerol acyltransferase (LPGAT) activities (By similarity). Required for establishment of the hematopoietic and endothelial lineages (By similarity).</text>
</comment>
<comment type="catalytic activity">
    <reaction evidence="2">
        <text>a 1-acyl-sn-glycero-3-phosphate + an acyl-CoA = a 1,2-diacyl-sn-glycero-3-phosphate + CoA</text>
        <dbReference type="Rhea" id="RHEA:19709"/>
        <dbReference type="ChEBI" id="CHEBI:57287"/>
        <dbReference type="ChEBI" id="CHEBI:57970"/>
        <dbReference type="ChEBI" id="CHEBI:58342"/>
        <dbReference type="ChEBI" id="CHEBI:58608"/>
        <dbReference type="EC" id="2.3.1.51"/>
    </reaction>
    <physiologicalReaction direction="left-to-right" evidence="2">
        <dbReference type="Rhea" id="RHEA:19710"/>
    </physiologicalReaction>
</comment>
<comment type="catalytic activity">
    <reaction evidence="2">
        <text>a 1-acyl-sn-glycero-3-phospho-(1D-myo-inositol) + an acyl-CoA = a 1,2-diacyl-sn-glycero-3-phospho-(1D-myo-inositol) + CoA</text>
        <dbReference type="Rhea" id="RHEA:33195"/>
        <dbReference type="ChEBI" id="CHEBI:57287"/>
        <dbReference type="ChEBI" id="CHEBI:57880"/>
        <dbReference type="ChEBI" id="CHEBI:58342"/>
        <dbReference type="ChEBI" id="CHEBI:64771"/>
    </reaction>
    <physiologicalReaction direction="left-to-right" evidence="2">
        <dbReference type="Rhea" id="RHEA:33196"/>
    </physiologicalReaction>
</comment>
<comment type="catalytic activity">
    <reaction evidence="2">
        <text>1-acyl-sn-glycero-3-phospho-(1'-sn-glycerol) + an acyl-CoA = a 1,2-diacyl-sn-glycero-3-phospho-(1'-sn-glycerol) + CoA</text>
        <dbReference type="Rhea" id="RHEA:33203"/>
        <dbReference type="ChEBI" id="CHEBI:57287"/>
        <dbReference type="ChEBI" id="CHEBI:58342"/>
        <dbReference type="ChEBI" id="CHEBI:64716"/>
        <dbReference type="ChEBI" id="CHEBI:64840"/>
    </reaction>
    <physiologicalReaction direction="left-to-right" evidence="2">
        <dbReference type="Rhea" id="RHEA:33204"/>
    </physiologicalReaction>
</comment>
<comment type="catalytic activity">
    <reaction evidence="2">
        <text>1-hexadecanoyl-sn-glycero-3-phosphate + (9Z)-octadecenoyl-CoA = 1-hexadecanoyl-2-(9Z-octadecenoyl)-sn-glycero-3-phosphate + CoA</text>
        <dbReference type="Rhea" id="RHEA:33187"/>
        <dbReference type="ChEBI" id="CHEBI:57287"/>
        <dbReference type="ChEBI" id="CHEBI:57387"/>
        <dbReference type="ChEBI" id="CHEBI:57518"/>
        <dbReference type="ChEBI" id="CHEBI:64839"/>
    </reaction>
    <physiologicalReaction direction="left-to-right" evidence="2">
        <dbReference type="Rhea" id="RHEA:33188"/>
    </physiologicalReaction>
</comment>
<comment type="catalytic activity">
    <reaction evidence="2">
        <text>1-(9Z-octadecenoyl)-sn-glycero-3-phosphate + (9Z)-octadecenoyl-CoA = 1,2-di-(9Z-octadecenoyl)-sn-glycero-3-phosphate + CoA</text>
        <dbReference type="Rhea" id="RHEA:37131"/>
        <dbReference type="ChEBI" id="CHEBI:57287"/>
        <dbReference type="ChEBI" id="CHEBI:57387"/>
        <dbReference type="ChEBI" id="CHEBI:74544"/>
        <dbReference type="ChEBI" id="CHEBI:74546"/>
    </reaction>
    <physiologicalReaction direction="left-to-right" evidence="2">
        <dbReference type="Rhea" id="RHEA:37132"/>
    </physiologicalReaction>
</comment>
<comment type="catalytic activity">
    <reaction evidence="2">
        <text>1-(9Z,12Z)-octadecadienoyl-sn-glycero-3-phosphate + (9Z)-octadecenoyl-CoA = 1-(9Z,12Z)-octadecadienoyl-2-(9Z)-octadecenoyl-sn-glycero-3-phosphate + CoA</text>
        <dbReference type="Rhea" id="RHEA:37135"/>
        <dbReference type="ChEBI" id="CHEBI:57287"/>
        <dbReference type="ChEBI" id="CHEBI:57387"/>
        <dbReference type="ChEBI" id="CHEBI:74547"/>
        <dbReference type="ChEBI" id="CHEBI:74548"/>
    </reaction>
    <physiologicalReaction direction="left-to-right" evidence="2">
        <dbReference type="Rhea" id="RHEA:37136"/>
    </physiologicalReaction>
</comment>
<comment type="catalytic activity">
    <reaction evidence="2">
        <text>1-(9Z,12Z,15Z)-octadecatrienoyl-sn-glycero-3-phosphate + (9Z)-octadecenoyl-CoA = 1-(9Z,12Z,15Z)-octadecatrienoyl-2-(9Z)-octadecenoyl-sn-glycero-3-phosphate + CoA</text>
        <dbReference type="Rhea" id="RHEA:37139"/>
        <dbReference type="ChEBI" id="CHEBI:57287"/>
        <dbReference type="ChEBI" id="CHEBI:57387"/>
        <dbReference type="ChEBI" id="CHEBI:74549"/>
        <dbReference type="ChEBI" id="CHEBI:74550"/>
    </reaction>
    <physiologicalReaction direction="left-to-right" evidence="2">
        <dbReference type="Rhea" id="RHEA:37140"/>
    </physiologicalReaction>
</comment>
<comment type="catalytic activity">
    <reaction evidence="2">
        <text>1-(9Z-octadecenoyl)-sn-glycero-3-phosphate + hexadecanoyl-CoA = 1-(9Z)-octadecenoyl-2-hexadecanoyl-sn-glycero-3-phosphate + CoA</text>
        <dbReference type="Rhea" id="RHEA:37143"/>
        <dbReference type="ChEBI" id="CHEBI:57287"/>
        <dbReference type="ChEBI" id="CHEBI:57379"/>
        <dbReference type="ChEBI" id="CHEBI:74544"/>
        <dbReference type="ChEBI" id="CHEBI:74551"/>
    </reaction>
    <physiologicalReaction direction="left-to-right" evidence="2">
        <dbReference type="Rhea" id="RHEA:37144"/>
    </physiologicalReaction>
</comment>
<comment type="catalytic activity">
    <reaction evidence="2">
        <text>1-(9Z-octadecenoyl)-sn-glycero-3-phosphate + octadecanoyl-CoA = 1-(9Z-octadecenoyl)-2-octadecanoyl-sn-glycero-3-phosphate + CoA</text>
        <dbReference type="Rhea" id="RHEA:37147"/>
        <dbReference type="ChEBI" id="CHEBI:57287"/>
        <dbReference type="ChEBI" id="CHEBI:57394"/>
        <dbReference type="ChEBI" id="CHEBI:74544"/>
        <dbReference type="ChEBI" id="CHEBI:74552"/>
    </reaction>
    <physiologicalReaction direction="left-to-right" evidence="2">
        <dbReference type="Rhea" id="RHEA:37148"/>
    </physiologicalReaction>
</comment>
<comment type="catalytic activity">
    <reaction evidence="2">
        <text>1-acyl-sn-glycero-3-phospho-(1'-sn-glycerol) + (9Z)-octadecenoyl-CoA = 1-acyl-2-(9Z-octadecenoyl)-sn-glycero-3-phospho-(1'-sn-glycerol) + CoA</text>
        <dbReference type="Rhea" id="RHEA:37619"/>
        <dbReference type="ChEBI" id="CHEBI:57287"/>
        <dbReference type="ChEBI" id="CHEBI:57387"/>
        <dbReference type="ChEBI" id="CHEBI:64840"/>
        <dbReference type="ChEBI" id="CHEBI:75173"/>
    </reaction>
    <physiologicalReaction direction="left-to-right" evidence="2">
        <dbReference type="Rhea" id="RHEA:37620"/>
    </physiologicalReaction>
</comment>
<comment type="catalytic activity">
    <reaction evidence="2">
        <text>a 1-acyl-sn-glycero-3-phospho-(1D-myo-inositol) + (9Z)-octadecenoyl-CoA = a 1-acyl-2-(9Z-octadecenoyl)-sn-glycero-3-phospho-(1D-myo-inositol) + CoA</text>
        <dbReference type="Rhea" id="RHEA:37623"/>
        <dbReference type="ChEBI" id="CHEBI:57287"/>
        <dbReference type="ChEBI" id="CHEBI:57387"/>
        <dbReference type="ChEBI" id="CHEBI:64771"/>
        <dbReference type="ChEBI" id="CHEBI:75116"/>
    </reaction>
    <physiologicalReaction direction="left-to-right" evidence="2">
        <dbReference type="Rhea" id="RHEA:37624"/>
    </physiologicalReaction>
</comment>
<comment type="catalytic activity">
    <reaction evidence="2">
        <text>1-hexadecanoyl-sn-glycero-3-phospho-(1D-myo-inositol) + hexadecanoyl-CoA = 1,2-dihexadecanoyl-sn-glycero-3-phospho-(1D-myo-inositol) + CoA</text>
        <dbReference type="Rhea" id="RHEA:35871"/>
        <dbReference type="ChEBI" id="CHEBI:57287"/>
        <dbReference type="ChEBI" id="CHEBI:57379"/>
        <dbReference type="ChEBI" id="CHEBI:72833"/>
        <dbReference type="ChEBI" id="CHEBI:72835"/>
    </reaction>
    <physiologicalReaction direction="left-to-right" evidence="2">
        <dbReference type="Rhea" id="RHEA:35872"/>
    </physiologicalReaction>
</comment>
<comment type="catalytic activity">
    <reaction evidence="2">
        <text>1-hexadecanoyl-sn-glycero-3-phospho-(1D-myo-inositol) + octadecanoyl-CoA = 1-hexadecanoyl-2-octadecanoyl-sn-glycero-3-phospho-(1D-myo-inositol) + CoA</text>
        <dbReference type="Rhea" id="RHEA:35875"/>
        <dbReference type="ChEBI" id="CHEBI:57287"/>
        <dbReference type="ChEBI" id="CHEBI:57394"/>
        <dbReference type="ChEBI" id="CHEBI:72833"/>
        <dbReference type="ChEBI" id="CHEBI:72836"/>
    </reaction>
    <physiologicalReaction direction="left-to-right" evidence="2">
        <dbReference type="Rhea" id="RHEA:35876"/>
    </physiologicalReaction>
</comment>
<comment type="catalytic activity">
    <reaction evidence="2">
        <text>1-hexadecanoyl-sn-glycero-3-phospho-(1D-myo-inositol) + (9Z)-octadecenoyl-CoA = 1-hexadecanoyl-2-(9Z-octadecenoyl)-sn-glycero-3-phospho-(1D-myo-inositol) + CoA</text>
        <dbReference type="Rhea" id="RHEA:35879"/>
        <dbReference type="ChEBI" id="CHEBI:57287"/>
        <dbReference type="ChEBI" id="CHEBI:57387"/>
        <dbReference type="ChEBI" id="CHEBI:72833"/>
        <dbReference type="ChEBI" id="CHEBI:72837"/>
    </reaction>
    <physiologicalReaction direction="left-to-right" evidence="2">
        <dbReference type="Rhea" id="RHEA:35880"/>
    </physiologicalReaction>
</comment>
<comment type="catalytic activity">
    <reaction evidence="2">
        <text>1-hexadecanoyl-sn-glycero-3-phospho-(1D-myo-inositol) + (9Z,12Z)-octadecadienoyl-CoA = 1-hexadecanoyl-2-(9Z,12Z-octadecadienoyl)-sn-glycero-3-phospho-(1D-myo-inositol) + CoA</text>
        <dbReference type="Rhea" id="RHEA:35883"/>
        <dbReference type="ChEBI" id="CHEBI:57287"/>
        <dbReference type="ChEBI" id="CHEBI:57383"/>
        <dbReference type="ChEBI" id="CHEBI:72833"/>
        <dbReference type="ChEBI" id="CHEBI:72838"/>
    </reaction>
    <physiologicalReaction direction="left-to-right" evidence="2">
        <dbReference type="Rhea" id="RHEA:35884"/>
    </physiologicalReaction>
</comment>
<comment type="catalytic activity">
    <reaction evidence="2">
        <text>1-hexadecanoyl-sn-glycero-3-phospho-(1D-myo-inositol) + (5Z,8Z,11Z,14Z)-eicosatetraenoyl-CoA = 1-hexadecanoyl-2-(5Z,8Z,11Z,14Z-eicosatetraenoyl)-sn-glycero-3-phospho-D-myo-inositol + CoA</text>
        <dbReference type="Rhea" id="RHEA:35867"/>
        <dbReference type="ChEBI" id="CHEBI:57287"/>
        <dbReference type="ChEBI" id="CHEBI:57368"/>
        <dbReference type="ChEBI" id="CHEBI:72833"/>
        <dbReference type="ChEBI" id="CHEBI:72834"/>
    </reaction>
    <physiologicalReaction direction="left-to-right" evidence="2">
        <dbReference type="Rhea" id="RHEA:35868"/>
    </physiologicalReaction>
</comment>
<comment type="catalytic activity">
    <reaction evidence="2">
        <text>1-hexadecanoyl-sn-glycero-3-phospho-(1'-sn-glycerol) + hexadecanoyl-CoA = 1,2-dihexadecanoyl-sn-glycero-3-phospho-(1'-sn-glycerol) + CoA</text>
        <dbReference type="Rhea" id="RHEA:35851"/>
        <dbReference type="ChEBI" id="CHEBI:57287"/>
        <dbReference type="ChEBI" id="CHEBI:57379"/>
        <dbReference type="ChEBI" id="CHEBI:72829"/>
        <dbReference type="ChEBI" id="CHEBI:75158"/>
    </reaction>
    <physiologicalReaction direction="left-to-right" evidence="2">
        <dbReference type="Rhea" id="RHEA:35852"/>
    </physiologicalReaction>
</comment>
<comment type="catalytic activity">
    <reaction evidence="2">
        <text>1-hexadecanoyl-sn-glycero-3-phospho-(1'-sn-glycerol) + octadecanoyl-CoA = 1-hexadecanoyl-2-octadecanoyl-sn-glycero-3-phospho-(1'-sn-glycerol) + CoA</text>
        <dbReference type="Rhea" id="RHEA:35887"/>
        <dbReference type="ChEBI" id="CHEBI:57287"/>
        <dbReference type="ChEBI" id="CHEBI:57394"/>
        <dbReference type="ChEBI" id="CHEBI:72839"/>
        <dbReference type="ChEBI" id="CHEBI:75158"/>
    </reaction>
    <physiologicalReaction direction="left-to-right" evidence="2">
        <dbReference type="Rhea" id="RHEA:35888"/>
    </physiologicalReaction>
</comment>
<comment type="catalytic activity">
    <reaction evidence="2">
        <text>1-hexadecanoyl-sn-glycero-3-phospho-(1'-sn-glycerol) + (9Z)-octadecenoyl-CoA = 1-hexadecanoyl-2-(9Z-octadecenoyl)-sn-glycero-3-phospho-(1'-sn-glycerol) + CoA</text>
        <dbReference type="Rhea" id="RHEA:35891"/>
        <dbReference type="ChEBI" id="CHEBI:57287"/>
        <dbReference type="ChEBI" id="CHEBI:57387"/>
        <dbReference type="ChEBI" id="CHEBI:72841"/>
        <dbReference type="ChEBI" id="CHEBI:75158"/>
    </reaction>
    <physiologicalReaction direction="left-to-right" evidence="2">
        <dbReference type="Rhea" id="RHEA:35892"/>
    </physiologicalReaction>
</comment>
<comment type="catalytic activity">
    <reaction evidence="2">
        <text>1-hexadecanoyl-sn-glycero-3-phospho-(1'-sn-glycerol) + (9Z,12Z)-octadecadienoyl-CoA = 1-hexadecanoyl-2-(9Z,12Z-octadecadienoyl)-sn-glycero-3-phospho-(1'-sn-glycerol) + CoA</text>
        <dbReference type="Rhea" id="RHEA:35895"/>
        <dbReference type="ChEBI" id="CHEBI:57287"/>
        <dbReference type="ChEBI" id="CHEBI:57383"/>
        <dbReference type="ChEBI" id="CHEBI:72840"/>
        <dbReference type="ChEBI" id="CHEBI:75158"/>
    </reaction>
    <physiologicalReaction direction="left-to-right" evidence="2">
        <dbReference type="Rhea" id="RHEA:35896"/>
    </physiologicalReaction>
</comment>
<comment type="catalytic activity">
    <reaction evidence="2">
        <text>1-tetradecanoyl-sn-glycero-3-phospho-(1'-sn-glycerol) + (9Z)-octadecenoyl-CoA = 1-tetradecanoyl-2-(9Z-octadecenoyl)-sn-glycero-3-phospho-(1'-sn-glycerol) + CoA</text>
        <dbReference type="Rhea" id="RHEA:37643"/>
        <dbReference type="ChEBI" id="CHEBI:57287"/>
        <dbReference type="ChEBI" id="CHEBI:57387"/>
        <dbReference type="ChEBI" id="CHEBI:72826"/>
        <dbReference type="ChEBI" id="CHEBI:75161"/>
    </reaction>
    <physiologicalReaction direction="left-to-right" evidence="2">
        <dbReference type="Rhea" id="RHEA:37644"/>
    </physiologicalReaction>
</comment>
<comment type="catalytic activity">
    <reaction evidence="2">
        <text>1-octadecanoyl-sn-glycero-3-phospho-(1'-sn-glycerol) + (9Z)-octadecenoyl-CoA = 1-octadecanoyl-2-(9Z-octadecenoyl)-sn-glycero-3-phospho-(1'-sn-glycerol) + CoA</text>
        <dbReference type="Rhea" id="RHEA:37647"/>
        <dbReference type="ChEBI" id="CHEBI:57287"/>
        <dbReference type="ChEBI" id="CHEBI:57387"/>
        <dbReference type="ChEBI" id="CHEBI:72827"/>
        <dbReference type="ChEBI" id="CHEBI:72845"/>
    </reaction>
    <physiologicalReaction direction="left-to-right" evidence="2">
        <dbReference type="Rhea" id="RHEA:37648"/>
    </physiologicalReaction>
</comment>
<comment type="catalytic activity">
    <reaction evidence="2">
        <text>1-(9Z-octadecenoyl)-sn-glycero-3-phospho-(1'-sn-glycerol) + (9Z)-octadecenoyl-CoA = 1,2-di-(9Z-octadecenoyl)-sn-glycero-3-phospho-(1'-sn-glycerol) + CoA</text>
        <dbReference type="Rhea" id="RHEA:37651"/>
        <dbReference type="ChEBI" id="CHEBI:57287"/>
        <dbReference type="ChEBI" id="CHEBI:57387"/>
        <dbReference type="ChEBI" id="CHEBI:72828"/>
        <dbReference type="ChEBI" id="CHEBI:75163"/>
    </reaction>
    <physiologicalReaction direction="left-to-right" evidence="2">
        <dbReference type="Rhea" id="RHEA:37652"/>
    </physiologicalReaction>
</comment>
<comment type="catalytic activity">
    <reaction evidence="2">
        <text>1-hexadecanoyl-sn-glycero-3-phospho-(1D-myo-inositol) + dodecanoyl-CoA = 1-hexadecanoyl-2-dodecanoyl-sn-glycero-3-phospho-(1D-myo-inositol) + CoA</text>
        <dbReference type="Rhea" id="RHEA:37639"/>
        <dbReference type="ChEBI" id="CHEBI:57287"/>
        <dbReference type="ChEBI" id="CHEBI:57375"/>
        <dbReference type="ChEBI" id="CHEBI:72833"/>
        <dbReference type="ChEBI" id="CHEBI:75160"/>
    </reaction>
    <physiologicalReaction direction="left-to-right" evidence="2">
        <dbReference type="Rhea" id="RHEA:37640"/>
    </physiologicalReaction>
</comment>
<comment type="catalytic activity">
    <reaction evidence="1">
        <text>1',3'-bis-[1-acyl-sn-glycero-3-phospho]-glycerol + (9Z)-octadecenoyl-CoA = 1'-[1-acyl-2-(9Z)-octadecenoyl-sn-glycero-3-phospho],3'-[1-acyl,2-hydroxy-sn-glycero-3-phospho]-glycerol + CoA</text>
        <dbReference type="Rhea" id="RHEA:37615"/>
        <dbReference type="ChEBI" id="CHEBI:57287"/>
        <dbReference type="ChEBI" id="CHEBI:57387"/>
        <dbReference type="ChEBI" id="CHEBI:75137"/>
        <dbReference type="ChEBI" id="CHEBI:75139"/>
    </reaction>
    <physiologicalReaction direction="left-to-right" evidence="1">
        <dbReference type="Rhea" id="RHEA:37616"/>
    </physiologicalReaction>
</comment>
<comment type="catalytic activity">
    <reaction evidence="1">
        <text>1'-[1,2-diacyl-sn-glycero-3-phospho],3'-[1-acyl-sn-glycero-3-phospho]-glycerol + (9Z)-octadecenoyl-CoA = 1'-[1,2-diacyl-sn-glycero-3-phospho],3'-[1-acyl,2-(9Z)-octadecenoyl-sn-glycero-3-phospho]-glycerol + CoA</text>
        <dbReference type="Rhea" id="RHEA:37611"/>
        <dbReference type="ChEBI" id="CHEBI:57287"/>
        <dbReference type="ChEBI" id="CHEBI:57387"/>
        <dbReference type="ChEBI" id="CHEBI:64743"/>
        <dbReference type="ChEBI" id="CHEBI:75140"/>
    </reaction>
    <physiologicalReaction direction="left-to-right" evidence="1">
        <dbReference type="Rhea" id="RHEA:37612"/>
    </physiologicalReaction>
</comment>
<comment type="catalytic activity">
    <reaction evidence="1">
        <text>1'-[1,2-diacyl-sn-glycero-3-phospho],3'-[1-acyl-sn-glycero-3-phospho]-glycerol + (9Z,12Z)-octadecadienoyl-CoA = 1'-[1,2-diacyl-sn-glycero-3-phospho],3'-[1-acyl,2-(9Z,12Z)-octadecadienoyl-sn-glycero-3-phospho]-glycerol + CoA</text>
        <dbReference type="Rhea" id="RHEA:37675"/>
        <dbReference type="ChEBI" id="CHEBI:57287"/>
        <dbReference type="ChEBI" id="CHEBI:57383"/>
        <dbReference type="ChEBI" id="CHEBI:64743"/>
        <dbReference type="ChEBI" id="CHEBI:75205"/>
    </reaction>
    <physiologicalReaction direction="left-to-right" evidence="1">
        <dbReference type="Rhea" id="RHEA:37676"/>
    </physiologicalReaction>
</comment>
<comment type="catalytic activity">
    <reaction evidence="1">
        <text>1'-[1,2-diacyl-sn-glycero-3-phospho],3'-[1-acyl-sn-glycero-3-phospho]-glycerol + dodecanoyl-CoA = 1'-[1,2-diacyl-sn-glycero-3-phospho],3'-[1-acyl,2-dodecanoyl-sn-glycero-3-phospho]-glycerol + CoA</text>
        <dbReference type="Rhea" id="RHEA:37679"/>
        <dbReference type="ChEBI" id="CHEBI:57287"/>
        <dbReference type="ChEBI" id="CHEBI:57375"/>
        <dbReference type="ChEBI" id="CHEBI:64743"/>
        <dbReference type="ChEBI" id="CHEBI:75203"/>
    </reaction>
    <physiologicalReaction direction="left-to-right" evidence="1">
        <dbReference type="Rhea" id="RHEA:37680"/>
    </physiologicalReaction>
</comment>
<comment type="catalytic activity">
    <reaction evidence="1">
        <text>1',3'-bis-[1-acyl-sn-glycero-3-phospho]-glycerol + dodecanoyl-CoA = 1'-[1-acyl-2-dodecanoyl-sn-glycero-3-phospho],3'-[1-acyl,2-hydroxy-sn-glycero-3-phospho]-glycerol + CoA</text>
        <dbReference type="Rhea" id="RHEA:37683"/>
        <dbReference type="ChEBI" id="CHEBI:57287"/>
        <dbReference type="ChEBI" id="CHEBI:57375"/>
        <dbReference type="ChEBI" id="CHEBI:75137"/>
        <dbReference type="ChEBI" id="CHEBI:75201"/>
    </reaction>
    <physiologicalReaction direction="left-to-right" evidence="1">
        <dbReference type="Rhea" id="RHEA:37684"/>
    </physiologicalReaction>
</comment>
<comment type="catalytic activity">
    <reaction evidence="1">
        <text>a 1-acyl-sn-glycero-3-phosphate + (9Z)-octadecenoyl-CoA = a 1-acyl-2-(9Z-octadecenoyl)-sn-glycero-3-phosphate + CoA</text>
        <dbReference type="Rhea" id="RHEA:37427"/>
        <dbReference type="ChEBI" id="CHEBI:57287"/>
        <dbReference type="ChEBI" id="CHEBI:57387"/>
        <dbReference type="ChEBI" id="CHEBI:57970"/>
        <dbReference type="ChEBI" id="CHEBI:74917"/>
    </reaction>
    <physiologicalReaction direction="left-to-right" evidence="1">
        <dbReference type="Rhea" id="RHEA:37428"/>
    </physiologicalReaction>
</comment>
<comment type="catalytic activity">
    <reaction evidence="1">
        <text>1',3'-bis-[1-acyl-sn-glycero-3-phospho]-glycerol + (9Z,12Z)-octadecadienoyl-CoA = 1'-[1-acyl-2-(9Z,12Z)-octadecadienoyl-sn-glycero-3-phospho],3'-[1-acyl,2-hydroxy-sn-glycero-3-phospho]-glycerol + CoA</text>
        <dbReference type="Rhea" id="RHEA:37687"/>
        <dbReference type="ChEBI" id="CHEBI:57287"/>
        <dbReference type="ChEBI" id="CHEBI:57383"/>
        <dbReference type="ChEBI" id="CHEBI:75137"/>
        <dbReference type="ChEBI" id="CHEBI:75209"/>
    </reaction>
    <physiologicalReaction direction="left-to-right" evidence="1">
        <dbReference type="Rhea" id="RHEA:37688"/>
    </physiologicalReaction>
</comment>
<comment type="catalytic activity">
    <reaction evidence="1">
        <text>1',3'-bis-[1-acyl-sn-glycero-3-phospho]-glycerol + hexadecanoyl-CoA = 1'-[1-acyl-2-hexadecanoyl-sn-glycero-3-phospho],3'-[1-acyl,2-hydroxy-sn-glycero-3-phospho]-glycerol + CoA</text>
        <dbReference type="Rhea" id="RHEA:37691"/>
        <dbReference type="ChEBI" id="CHEBI:57287"/>
        <dbReference type="ChEBI" id="CHEBI:57379"/>
        <dbReference type="ChEBI" id="CHEBI:75137"/>
        <dbReference type="ChEBI" id="CHEBI:75207"/>
    </reaction>
    <physiologicalReaction direction="left-to-right" evidence="1">
        <dbReference type="Rhea" id="RHEA:37692"/>
    </physiologicalReaction>
</comment>
<comment type="catalytic activity">
    <reaction evidence="1">
        <text>1',3'-bis-[1-acyl-sn-glycero-3-phospho]-glycerol + octadecanoyl-CoA = 1'-[1-acyl-2-octadecanoyl-sn-glycero-3-phospho],3'-[1-acyl,2-hydroxy-sn-glycero-3-phospho]-glycerol + CoA</text>
        <dbReference type="Rhea" id="RHEA:37695"/>
        <dbReference type="ChEBI" id="CHEBI:57287"/>
        <dbReference type="ChEBI" id="CHEBI:57394"/>
        <dbReference type="ChEBI" id="CHEBI:75137"/>
        <dbReference type="ChEBI" id="CHEBI:75208"/>
    </reaction>
    <physiologicalReaction direction="left-to-right" evidence="1">
        <dbReference type="Rhea" id="RHEA:37696"/>
    </physiologicalReaction>
</comment>
<comment type="catalytic activity">
    <reaction evidence="1">
        <text>1'-[1,2-diacyl-sn-glycero-3-phospho],3'-[1-acyl-sn-glycero-3-phospho]-glycerol + octanoyl-CoA = 1'-[1,2-diacyl-sn-glycero-3-phospho],3'-[1-acyl,2-octanoyl-sn-glycero-3-phospho]-glycerol + CoA</text>
        <dbReference type="Rhea" id="RHEA:38623"/>
        <dbReference type="ChEBI" id="CHEBI:57287"/>
        <dbReference type="ChEBI" id="CHEBI:57386"/>
        <dbReference type="ChEBI" id="CHEBI:64743"/>
        <dbReference type="ChEBI" id="CHEBI:75990"/>
    </reaction>
    <physiologicalReaction direction="left-to-right" evidence="1">
        <dbReference type="Rhea" id="RHEA:38624"/>
    </physiologicalReaction>
</comment>
<comment type="catalytic activity">
    <reaction evidence="1">
        <text>1',3'-bis-[1-acyl-sn-glycero-3-phospho]-glycerol + octanoyl-CoA = 1'-[1-acyl-2-octanoyl-sn-glycero-3-phospho],3'-[1-acyl,2-hydroxy-sn-glycero-3-phospho]-glycerol + CoA</text>
        <dbReference type="Rhea" id="RHEA:38627"/>
        <dbReference type="ChEBI" id="CHEBI:57287"/>
        <dbReference type="ChEBI" id="CHEBI:57386"/>
        <dbReference type="ChEBI" id="CHEBI:75137"/>
        <dbReference type="ChEBI" id="CHEBI:75993"/>
    </reaction>
    <physiologicalReaction direction="left-to-right" evidence="1">
        <dbReference type="Rhea" id="RHEA:38628"/>
    </physiologicalReaction>
</comment>
<comment type="catalytic activity">
    <reaction evidence="1">
        <text>1'-[1,2-diacyl-sn-glycero-3-phospho],3'-[1-acyl-sn-glycero-3-phospho]-glycerol + hexadecanoyl-CoA = 1'-[1,2-diacyl-sn-glycero-3-phospho],3'-[1-acyl,2-hexadecanoyl-sn-glycero-3-phospho]-glycerol + CoA</text>
        <dbReference type="Rhea" id="RHEA:38631"/>
        <dbReference type="ChEBI" id="CHEBI:57287"/>
        <dbReference type="ChEBI" id="CHEBI:57379"/>
        <dbReference type="ChEBI" id="CHEBI:64743"/>
        <dbReference type="ChEBI" id="CHEBI:75994"/>
    </reaction>
    <physiologicalReaction direction="left-to-right" evidence="1">
        <dbReference type="Rhea" id="RHEA:38632"/>
    </physiologicalReaction>
</comment>
<comment type="catalytic activity">
    <reaction evidence="1">
        <text>1'-[1,2-diacyl-sn-glycero-3-phospho],3'-[1-acyl-sn-glycero-3-phospho]-glycerol + (5Z,8Z,11Z,14Z)-eicosatetraenoyl-CoA = 1'-[1,2-diacyl-sn-glycero-3-phospho],3'-[1-acyl,2-(5Z,8Z,11Z,14Z)-eicosatetraenoyl-sn-glycero-3-phospho]-glycerol + CoA</text>
        <dbReference type="Rhea" id="RHEA:38635"/>
        <dbReference type="ChEBI" id="CHEBI:57287"/>
        <dbReference type="ChEBI" id="CHEBI:57368"/>
        <dbReference type="ChEBI" id="CHEBI:64743"/>
        <dbReference type="ChEBI" id="CHEBI:75995"/>
    </reaction>
    <physiologicalReaction direction="left-to-right" evidence="1">
        <dbReference type="Rhea" id="RHEA:38636"/>
    </physiologicalReaction>
</comment>
<comment type="catalytic activity">
    <reaction evidence="1">
        <text>1',3'-bis-[1-acyl-sn-glycero-3-phospho]-glycerol + (5Z,8Z,11Z,14Z)-eicosatetraenoyl-CoA = 1'-[1-acyl-2-(5Z,8Z,11Z,14Z)-eicosatetraenoyl-sn-glycero-3-phospho],3'-[1-acyl,2-hydroxy-sn-glycero-3-phospho]-glycerol + CoA</text>
        <dbReference type="Rhea" id="RHEA:38639"/>
        <dbReference type="ChEBI" id="CHEBI:57287"/>
        <dbReference type="ChEBI" id="CHEBI:57368"/>
        <dbReference type="ChEBI" id="CHEBI:75137"/>
        <dbReference type="ChEBI" id="CHEBI:75996"/>
    </reaction>
    <physiologicalReaction direction="left-to-right" evidence="1">
        <dbReference type="Rhea" id="RHEA:38640"/>
    </physiologicalReaction>
</comment>
<comment type="catalytic activity">
    <reaction evidence="1">
        <text>a 1-acyl-sn-glycero-3-phospho-(1D-myo-inositol) + octadecanoyl-CoA = a 1-acyl-2-octadecanoyl-sn-glycero-3-phospho-(1D-myo-inositol) + CoA</text>
        <dbReference type="Rhea" id="RHEA:43960"/>
        <dbReference type="ChEBI" id="CHEBI:57287"/>
        <dbReference type="ChEBI" id="CHEBI:57394"/>
        <dbReference type="ChEBI" id="CHEBI:64771"/>
        <dbReference type="ChEBI" id="CHEBI:83939"/>
    </reaction>
    <physiologicalReaction direction="left-to-right" evidence="1">
        <dbReference type="Rhea" id="RHEA:43961"/>
    </physiologicalReaction>
</comment>
<comment type="catalytic activity">
    <reaction evidence="1">
        <text>a 2-acyl-sn-glycero-3-phospho-D-myo-inositol + octadecanoyl-CoA = 1-octadecanoyl-2-acyl-sn-glycero-3-phospho-1D-myo-inositol + CoA</text>
        <dbReference type="Rhea" id="RHEA:43964"/>
        <dbReference type="ChEBI" id="CHEBI:57287"/>
        <dbReference type="ChEBI" id="CHEBI:57394"/>
        <dbReference type="ChEBI" id="CHEBI:64872"/>
        <dbReference type="ChEBI" id="CHEBI:65055"/>
    </reaction>
    <physiologicalReaction direction="left-to-right" evidence="1">
        <dbReference type="Rhea" id="RHEA:43965"/>
    </physiologicalReaction>
</comment>
<comment type="pathway">
    <text>Phospholipid metabolism; CDP-diacylglycerol biosynthesis; CDP-diacylglycerol from sn-glycerol 3-phosphate: step 2/3.</text>
</comment>
<comment type="subcellular location">
    <subcellularLocation>
        <location evidence="2">Endoplasmic reticulum membrane</location>
        <topology evidence="4">Multi-pass membrane protein</topology>
    </subcellularLocation>
</comment>
<comment type="domain">
    <text evidence="3">The HXXXXD motif is essential for acyltransferase activity and may constitute the binding site for the phosphate moiety of the glycerol-3-phosphate.</text>
</comment>
<comment type="similarity">
    <text evidence="5">Belongs to the 1-acyl-sn-glycerol-3-phosphate acyltransferase family.</text>
</comment>
<accession>Q5F3X0</accession>
<name>LCLT1_CHICK</name>
<reference key="1">
    <citation type="journal article" date="2005" name="Genome Biol.">
        <title>Full-length cDNAs from chicken bursal lymphocytes to facilitate gene function analysis.</title>
        <authorList>
            <person name="Caldwell R.B."/>
            <person name="Kierzek A.M."/>
            <person name="Arakawa H."/>
            <person name="Bezzubov Y."/>
            <person name="Zaim J."/>
            <person name="Fiedler P."/>
            <person name="Kutter S."/>
            <person name="Blagodatski A."/>
            <person name="Kostovska D."/>
            <person name="Koter M."/>
            <person name="Plachy J."/>
            <person name="Carninci P."/>
            <person name="Hayashizaki Y."/>
            <person name="Buerstedde J.-M."/>
        </authorList>
    </citation>
    <scope>NUCLEOTIDE SEQUENCE [LARGE SCALE MRNA]</scope>
    <source>
        <strain>CB</strain>
        <tissue>Bursa of Fabricius</tissue>
    </source>
</reference>
<organism>
    <name type="scientific">Gallus gallus</name>
    <name type="common">Chicken</name>
    <dbReference type="NCBI Taxonomy" id="9031"/>
    <lineage>
        <taxon>Eukaryota</taxon>
        <taxon>Metazoa</taxon>
        <taxon>Chordata</taxon>
        <taxon>Craniata</taxon>
        <taxon>Vertebrata</taxon>
        <taxon>Euteleostomi</taxon>
        <taxon>Archelosauria</taxon>
        <taxon>Archosauria</taxon>
        <taxon>Dinosauria</taxon>
        <taxon>Saurischia</taxon>
        <taxon>Theropoda</taxon>
        <taxon>Coelurosauria</taxon>
        <taxon>Aves</taxon>
        <taxon>Neognathae</taxon>
        <taxon>Galloanserae</taxon>
        <taxon>Galliformes</taxon>
        <taxon>Phasianidae</taxon>
        <taxon>Phasianinae</taxon>
        <taxon>Gallus</taxon>
    </lineage>
</organism>
<gene>
    <name type="primary">LCLAT1</name>
    <name evidence="2" type="synonym">AGPAT8</name>
    <name type="synonym">LYCAT</name>
    <name type="ORF">RCJMB04_5b22</name>
</gene>
<dbReference type="EC" id="2.3.1.-" evidence="1"/>
<dbReference type="EC" id="2.3.1.51" evidence="2"/>
<dbReference type="EMBL" id="AJ851530">
    <property type="protein sequence ID" value="CAH65164.1"/>
    <property type="molecule type" value="mRNA"/>
</dbReference>
<dbReference type="RefSeq" id="NP_001026210.1">
    <property type="nucleotide sequence ID" value="NM_001031039.3"/>
</dbReference>
<dbReference type="RefSeq" id="XP_015133569.1">
    <property type="nucleotide sequence ID" value="XM_015278083.4"/>
</dbReference>
<dbReference type="RefSeq" id="XP_015133570.1">
    <property type="nucleotide sequence ID" value="XM_015278084.4"/>
</dbReference>
<dbReference type="RefSeq" id="XP_015133571.1">
    <property type="nucleotide sequence ID" value="XM_015278085.4"/>
</dbReference>
<dbReference type="RefSeq" id="XP_040552965.1">
    <property type="nucleotide sequence ID" value="XM_040697031.2"/>
</dbReference>
<dbReference type="RefSeq" id="XP_040552966.1">
    <property type="nucleotide sequence ID" value="XM_040697032.2"/>
</dbReference>
<dbReference type="RefSeq" id="XP_040552968.1">
    <property type="nucleotide sequence ID" value="XM_040697034.2"/>
</dbReference>
<dbReference type="RefSeq" id="XP_046769608.1">
    <property type="nucleotide sequence ID" value="XM_046913652.1"/>
</dbReference>
<dbReference type="RefSeq" id="XP_046769609.1">
    <property type="nucleotide sequence ID" value="XM_046913653.1"/>
</dbReference>
<dbReference type="RefSeq" id="XP_046769610.1">
    <property type="nucleotide sequence ID" value="XM_046913654.1"/>
</dbReference>
<dbReference type="RefSeq" id="XP_046769612.1">
    <property type="nucleotide sequence ID" value="XM_046913656.1"/>
</dbReference>
<dbReference type="RefSeq" id="XP_046769613.1">
    <property type="nucleotide sequence ID" value="XM_046913657.1"/>
</dbReference>
<dbReference type="RefSeq" id="XP_046769614.1">
    <property type="nucleotide sequence ID" value="XM_046913658.1"/>
</dbReference>
<dbReference type="RefSeq" id="XP_046769615.1">
    <property type="nucleotide sequence ID" value="XM_046913659.1"/>
</dbReference>
<dbReference type="RefSeq" id="XP_046769616.1">
    <property type="nucleotide sequence ID" value="XM_046913660.1"/>
</dbReference>
<dbReference type="RefSeq" id="XP_046769617.1">
    <property type="nucleotide sequence ID" value="XM_046913661.1"/>
</dbReference>
<dbReference type="RefSeq" id="XP_046769618.1">
    <property type="nucleotide sequence ID" value="XM_046913662.1"/>
</dbReference>
<dbReference type="RefSeq" id="XP_046769619.1">
    <property type="nucleotide sequence ID" value="XM_046913663.1"/>
</dbReference>
<dbReference type="RefSeq" id="XP_046769620.1">
    <property type="nucleotide sequence ID" value="XM_046913664.1"/>
</dbReference>
<dbReference type="RefSeq" id="XP_046769621.1">
    <property type="nucleotide sequence ID" value="XM_046913665.1"/>
</dbReference>
<dbReference type="RefSeq" id="XP_046769623.1">
    <property type="nucleotide sequence ID" value="XM_046913667.1"/>
</dbReference>
<dbReference type="RefSeq" id="XP_046769624.1">
    <property type="nucleotide sequence ID" value="XM_046913668.1"/>
</dbReference>
<dbReference type="RefSeq" id="XP_046769625.1">
    <property type="nucleotide sequence ID" value="XM_046913669.1"/>
</dbReference>
<dbReference type="RefSeq" id="XP_046769626.1">
    <property type="nucleotide sequence ID" value="XM_046913670.1"/>
</dbReference>
<dbReference type="RefSeq" id="XP_046769627.1">
    <property type="nucleotide sequence ID" value="XM_046913671.1"/>
</dbReference>
<dbReference type="RefSeq" id="XP_046769628.1">
    <property type="nucleotide sequence ID" value="XM_046913672.1"/>
</dbReference>
<dbReference type="RefSeq" id="XP_046769629.1">
    <property type="nucleotide sequence ID" value="XM_046913673.1"/>
</dbReference>
<dbReference type="RefSeq" id="XP_046769630.1">
    <property type="nucleotide sequence ID" value="XM_046913674.1"/>
</dbReference>
<dbReference type="RefSeq" id="XP_046769631.1">
    <property type="nucleotide sequence ID" value="XM_046913675.1"/>
</dbReference>
<dbReference type="RefSeq" id="XP_046769632.1">
    <property type="nucleotide sequence ID" value="XM_046913676.1"/>
</dbReference>
<dbReference type="RefSeq" id="XP_046769633.1">
    <property type="nucleotide sequence ID" value="XM_046913677.1"/>
</dbReference>
<dbReference type="RefSeq" id="XP_046769634.1">
    <property type="nucleotide sequence ID" value="XM_046913678.1"/>
</dbReference>
<dbReference type="RefSeq" id="XP_046769635.1">
    <property type="nucleotide sequence ID" value="XM_046913679.1"/>
</dbReference>
<dbReference type="RefSeq" id="XP_046794693.1">
    <property type="nucleotide sequence ID" value="XM_046938737.1"/>
</dbReference>
<dbReference type="RefSeq" id="XP_046794694.1">
    <property type="nucleotide sequence ID" value="XM_046938738.1"/>
</dbReference>
<dbReference type="RefSeq" id="XP_046794695.1">
    <property type="nucleotide sequence ID" value="XM_046938739.1"/>
</dbReference>
<dbReference type="RefSeq" id="XP_046794696.1">
    <property type="nucleotide sequence ID" value="XM_046938740.1"/>
</dbReference>
<dbReference type="RefSeq" id="XP_046794697.1">
    <property type="nucleotide sequence ID" value="XM_046938741.1"/>
</dbReference>
<dbReference type="RefSeq" id="XP_046794698.1">
    <property type="nucleotide sequence ID" value="XM_046938742.1"/>
</dbReference>
<dbReference type="RefSeq" id="XP_046794699.1">
    <property type="nucleotide sequence ID" value="XM_046938743.1"/>
</dbReference>
<dbReference type="RefSeq" id="XP_046794700.1">
    <property type="nucleotide sequence ID" value="XM_046938744.1"/>
</dbReference>
<dbReference type="RefSeq" id="XP_046794701.1">
    <property type="nucleotide sequence ID" value="XM_046938745.1"/>
</dbReference>
<dbReference type="RefSeq" id="XP_046794702.1">
    <property type="nucleotide sequence ID" value="XM_046938746.1"/>
</dbReference>
<dbReference type="RefSeq" id="XP_046794703.1">
    <property type="nucleotide sequence ID" value="XM_046938747.1"/>
</dbReference>
<dbReference type="RefSeq" id="XP_046794704.1">
    <property type="nucleotide sequence ID" value="XM_046938748.1"/>
</dbReference>
<dbReference type="RefSeq" id="XP_046794705.1">
    <property type="nucleotide sequence ID" value="XM_046938749.1"/>
</dbReference>
<dbReference type="RefSeq" id="XP_046794706.1">
    <property type="nucleotide sequence ID" value="XM_046938750.1"/>
</dbReference>
<dbReference type="RefSeq" id="XP_046794707.1">
    <property type="nucleotide sequence ID" value="XM_046938751.1"/>
</dbReference>
<dbReference type="RefSeq" id="XP_046794708.1">
    <property type="nucleotide sequence ID" value="XM_046938752.1"/>
</dbReference>
<dbReference type="FunCoup" id="Q5F3X0">
    <property type="interactions" value="704"/>
</dbReference>
<dbReference type="STRING" id="9031.ENSGALP00000059984"/>
<dbReference type="PaxDb" id="9031-ENSGALP00000014726"/>
<dbReference type="GeneID" id="421303"/>
<dbReference type="KEGG" id="gga:421303"/>
<dbReference type="CTD" id="253558"/>
<dbReference type="VEuPathDB" id="HostDB:geneid_421303"/>
<dbReference type="eggNOG" id="KOG1505">
    <property type="taxonomic scope" value="Eukaryota"/>
</dbReference>
<dbReference type="HOGENOM" id="CLU_041844_4_0_1"/>
<dbReference type="InParanoid" id="Q5F3X0"/>
<dbReference type="OrthoDB" id="186786at2759"/>
<dbReference type="PhylomeDB" id="Q5F3X0"/>
<dbReference type="TreeFam" id="TF314346"/>
<dbReference type="Reactome" id="R-GGA-1482798">
    <property type="pathway name" value="Acyl chain remodeling of CL"/>
</dbReference>
<dbReference type="Reactome" id="R-GGA-1483166">
    <property type="pathway name" value="Synthesis of PA"/>
</dbReference>
<dbReference type="UniPathway" id="UPA00557">
    <property type="reaction ID" value="UER00613"/>
</dbReference>
<dbReference type="PRO" id="PR:Q5F3X0"/>
<dbReference type="Proteomes" id="UP000000539">
    <property type="component" value="Chromosome 3"/>
</dbReference>
<dbReference type="Bgee" id="ENSGALG00000009056">
    <property type="expression patterns" value="Expressed in kidney and 13 other cell types or tissues"/>
</dbReference>
<dbReference type="GO" id="GO:0012505">
    <property type="term" value="C:endomembrane system"/>
    <property type="evidence" value="ECO:0000318"/>
    <property type="project" value="GO_Central"/>
</dbReference>
<dbReference type="GO" id="GO:0005783">
    <property type="term" value="C:endoplasmic reticulum"/>
    <property type="evidence" value="ECO:0000250"/>
    <property type="project" value="UniProtKB"/>
</dbReference>
<dbReference type="GO" id="GO:0005789">
    <property type="term" value="C:endoplasmic reticulum membrane"/>
    <property type="evidence" value="ECO:0007669"/>
    <property type="project" value="UniProtKB-SubCell"/>
</dbReference>
<dbReference type="GO" id="GO:0003841">
    <property type="term" value="F:1-acylglycerol-3-phosphate O-acyltransferase activity"/>
    <property type="evidence" value="ECO:0000250"/>
    <property type="project" value="UniProtKB"/>
</dbReference>
<dbReference type="GO" id="GO:0016746">
    <property type="term" value="F:acyltransferase activity"/>
    <property type="evidence" value="ECO:0000318"/>
    <property type="project" value="GO_Central"/>
</dbReference>
<dbReference type="GO" id="GO:0016024">
    <property type="term" value="P:CDP-diacylglycerol biosynthetic process"/>
    <property type="evidence" value="ECO:0007669"/>
    <property type="project" value="UniProtKB-UniPathway"/>
</dbReference>
<dbReference type="GO" id="GO:0036149">
    <property type="term" value="P:phosphatidylinositol acyl-chain remodeling"/>
    <property type="evidence" value="ECO:0000318"/>
    <property type="project" value="GO_Central"/>
</dbReference>
<dbReference type="CDD" id="cd07990">
    <property type="entry name" value="LPLAT_LCLAT1-like"/>
    <property type="match status" value="1"/>
</dbReference>
<dbReference type="InterPro" id="IPR032098">
    <property type="entry name" value="Acyltransf_C"/>
</dbReference>
<dbReference type="InterPro" id="IPR002123">
    <property type="entry name" value="Plipid/glycerol_acylTrfase"/>
</dbReference>
<dbReference type="PANTHER" id="PTHR10983">
    <property type="entry name" value="1-ACYLGLYCEROL-3-PHOSPHATE ACYLTRANSFERASE-RELATED"/>
    <property type="match status" value="1"/>
</dbReference>
<dbReference type="PANTHER" id="PTHR10983:SF16">
    <property type="entry name" value="LYSOCARDIOLIPIN ACYLTRANSFERASE 1"/>
    <property type="match status" value="1"/>
</dbReference>
<dbReference type="Pfam" id="PF16076">
    <property type="entry name" value="Acyltransf_C"/>
    <property type="match status" value="1"/>
</dbReference>
<dbReference type="Pfam" id="PF01553">
    <property type="entry name" value="Acyltransferase"/>
    <property type="match status" value="1"/>
</dbReference>
<dbReference type="SMART" id="SM00563">
    <property type="entry name" value="PlsC"/>
    <property type="match status" value="1"/>
</dbReference>
<dbReference type="SUPFAM" id="SSF69593">
    <property type="entry name" value="Glycerol-3-phosphate (1)-acyltransferase"/>
    <property type="match status" value="1"/>
</dbReference>
<keyword id="KW-0012">Acyltransferase</keyword>
<keyword id="KW-0217">Developmental protein</keyword>
<keyword id="KW-0256">Endoplasmic reticulum</keyword>
<keyword id="KW-0444">Lipid biosynthesis</keyword>
<keyword id="KW-0443">Lipid metabolism</keyword>
<keyword id="KW-0472">Membrane</keyword>
<keyword id="KW-0594">Phospholipid biosynthesis</keyword>
<keyword id="KW-1208">Phospholipid metabolism</keyword>
<keyword id="KW-1185">Reference proteome</keyword>
<keyword id="KW-0808">Transferase</keyword>
<keyword id="KW-0812">Transmembrane</keyword>
<keyword id="KW-1133">Transmembrane helix</keyword>
<protein>
    <recommendedName>
        <fullName>Lysocardiolipin acyltransferase 1</fullName>
        <ecNumber evidence="1">2.3.1.-</ecNumber>
    </recommendedName>
    <alternativeName>
        <fullName evidence="2">1-acylglycerol-3-phosphate O-acyltransferase 8</fullName>
        <shortName>1-AGP acyltransferase 8</shortName>
        <shortName>1-AGPAT 8</shortName>
        <ecNumber evidence="2">2.3.1.51</ecNumber>
    </alternativeName>
    <alternativeName>
        <fullName evidence="1">Acyl-CoA:lysocardiolipin acyltransferase 1</fullName>
    </alternativeName>
</protein>